<protein>
    <recommendedName>
        <fullName>D-galactonate dehydratase family member Ent638_0932</fullName>
    </recommendedName>
</protein>
<evidence type="ECO:0000250" key="1"/>
<evidence type="ECO:0000269" key="2">
    <source>
    </source>
</evidence>
<evidence type="ECO:0000305" key="3"/>
<evidence type="ECO:0000305" key="4">
    <source>
    </source>
</evidence>
<evidence type="ECO:0007829" key="5">
    <source>
        <dbReference type="PDB" id="3TJI"/>
    </source>
</evidence>
<gene>
    <name type="ordered locus">Ent638_0932</name>
</gene>
<feature type="chain" id="PRO_0000429906" description="D-galactonate dehydratase family member Ent638_0932">
    <location>
        <begin position="1"/>
        <end position="399"/>
    </location>
</feature>
<feature type="binding site" evidence="2">
    <location>
        <position position="205"/>
    </location>
    <ligand>
        <name>Mg(2+)</name>
        <dbReference type="ChEBI" id="CHEBI:18420"/>
    </ligand>
</feature>
<feature type="binding site" evidence="1">
    <location>
        <position position="207"/>
    </location>
    <ligand>
        <name>D-arabinonate</name>
        <dbReference type="ChEBI" id="CHEBI:16157"/>
    </ligand>
</feature>
<feature type="binding site" evidence="2">
    <location>
        <position position="231"/>
    </location>
    <ligand>
        <name>Mg(2+)</name>
        <dbReference type="ChEBI" id="CHEBI:18420"/>
    </ligand>
</feature>
<feature type="binding site" evidence="1">
    <location>
        <position position="257"/>
    </location>
    <ligand>
        <name>D-arabinonate</name>
        <dbReference type="ChEBI" id="CHEBI:16157"/>
    </ligand>
</feature>
<feature type="binding site" evidence="2">
    <location>
        <position position="257"/>
    </location>
    <ligand>
        <name>Mg(2+)</name>
        <dbReference type="ChEBI" id="CHEBI:18420"/>
    </ligand>
</feature>
<feature type="binding site" evidence="1">
    <location>
        <position position="278"/>
    </location>
    <ligand>
        <name>D-arabinonate</name>
        <dbReference type="ChEBI" id="CHEBI:16157"/>
    </ligand>
</feature>
<feature type="binding site" evidence="1">
    <location>
        <position position="307"/>
    </location>
    <ligand>
        <name>D-arabinonate</name>
        <dbReference type="ChEBI" id="CHEBI:16157"/>
    </ligand>
</feature>
<feature type="binding site" evidence="1">
    <location>
        <position position="334"/>
    </location>
    <ligand>
        <name>D-arabinonate</name>
        <dbReference type="ChEBI" id="CHEBI:16157"/>
    </ligand>
</feature>
<feature type="strand" evidence="5">
    <location>
        <begin position="5"/>
        <end position="14"/>
    </location>
</feature>
<feature type="strand" evidence="5">
    <location>
        <begin position="16"/>
        <end position="19"/>
    </location>
</feature>
<feature type="strand" evidence="5">
    <location>
        <begin position="21"/>
        <end position="28"/>
    </location>
</feature>
<feature type="strand" evidence="5">
    <location>
        <begin position="34"/>
        <end position="37"/>
    </location>
</feature>
<feature type="helix" evidence="5">
    <location>
        <begin position="44"/>
        <end position="53"/>
    </location>
</feature>
<feature type="helix" evidence="5">
    <location>
        <begin position="55"/>
        <end position="59"/>
    </location>
</feature>
<feature type="helix" evidence="5">
    <location>
        <begin position="67"/>
        <end position="76"/>
    </location>
</feature>
<feature type="helix" evidence="5">
    <location>
        <begin position="84"/>
        <end position="105"/>
    </location>
</feature>
<feature type="helix" evidence="5">
    <location>
        <begin position="109"/>
        <end position="112"/>
    </location>
</feature>
<feature type="strand" evidence="5">
    <location>
        <begin position="117"/>
        <end position="119"/>
    </location>
</feature>
<feature type="strand" evidence="5">
    <location>
        <begin position="121"/>
        <end position="131"/>
    </location>
</feature>
<feature type="helix" evidence="5">
    <location>
        <begin position="132"/>
        <end position="144"/>
    </location>
</feature>
<feature type="strand" evidence="5">
    <location>
        <begin position="148"/>
        <end position="155"/>
    </location>
</feature>
<feature type="helix" evidence="5">
    <location>
        <begin position="161"/>
        <end position="163"/>
    </location>
</feature>
<feature type="strand" evidence="5">
    <location>
        <begin position="172"/>
        <end position="175"/>
    </location>
</feature>
<feature type="helix" evidence="5">
    <location>
        <begin position="178"/>
        <end position="196"/>
    </location>
</feature>
<feature type="strand" evidence="5">
    <location>
        <begin position="198"/>
        <end position="205"/>
    </location>
</feature>
<feature type="helix" evidence="5">
    <location>
        <begin position="212"/>
        <end position="222"/>
    </location>
</feature>
<feature type="helix" evidence="5">
    <location>
        <begin position="223"/>
        <end position="225"/>
    </location>
</feature>
<feature type="strand" evidence="5">
    <location>
        <begin position="228"/>
        <end position="231"/>
    </location>
</feature>
<feature type="helix" evidence="5">
    <location>
        <begin position="236"/>
        <end position="241"/>
    </location>
</feature>
<feature type="helix" evidence="5">
    <location>
        <begin position="242"/>
        <end position="248"/>
    </location>
</feature>
<feature type="strand" evidence="5">
    <location>
        <begin position="253"/>
        <end position="255"/>
    </location>
</feature>
<feature type="helix" evidence="5">
    <location>
        <begin position="262"/>
        <end position="264"/>
    </location>
</feature>
<feature type="helix" evidence="5">
    <location>
        <begin position="266"/>
        <end position="270"/>
    </location>
</feature>
<feature type="strand" evidence="5">
    <location>
        <begin position="275"/>
        <end position="277"/>
    </location>
</feature>
<feature type="helix" evidence="5">
    <location>
        <begin position="281"/>
        <end position="284"/>
    </location>
</feature>
<feature type="helix" evidence="5">
    <location>
        <begin position="287"/>
        <end position="299"/>
    </location>
</feature>
<feature type="strand" evidence="5">
    <location>
        <begin position="310"/>
        <end position="312"/>
    </location>
</feature>
<feature type="helix" evidence="5">
    <location>
        <begin position="314"/>
        <end position="326"/>
    </location>
</feature>
<feature type="helix" evidence="5">
    <location>
        <begin position="340"/>
        <end position="345"/>
    </location>
</feature>
<feature type="strand" evidence="5">
    <location>
        <begin position="362"/>
        <end position="365"/>
    </location>
</feature>
<feature type="helix" evidence="5">
    <location>
        <begin position="371"/>
        <end position="375"/>
    </location>
</feature>
<feature type="helix" evidence="5">
    <location>
        <begin position="385"/>
        <end position="387"/>
    </location>
</feature>
<feature type="strand" evidence="5">
    <location>
        <begin position="388"/>
        <end position="390"/>
    </location>
</feature>
<keyword id="KW-0002">3D-structure</keyword>
<keyword id="KW-0460">Magnesium</keyword>
<keyword id="KW-0479">Metal-binding</keyword>
<proteinExistence type="evidence at protein level"/>
<reference key="1">
    <citation type="journal article" date="2010" name="PLoS Genet.">
        <title>Genome sequence of the plant growth promoting endophytic bacterium Enterobacter sp. 638.</title>
        <authorList>
            <person name="Taghavi S."/>
            <person name="van der Lelie D."/>
            <person name="Hoffman A."/>
            <person name="Zhang Y.B."/>
            <person name="Walla M.D."/>
            <person name="Vangronsveld J."/>
            <person name="Newman L."/>
            <person name="Monchy S."/>
        </authorList>
    </citation>
    <scope>NUCLEOTIDE SEQUENCE [LARGE SCALE GENOMIC DNA]</scope>
    <source>
        <strain>638</strain>
    </source>
</reference>
<reference key="2">
    <citation type="journal article" date="2014" name="Biochemistry">
        <title>Discovery of function in the enolase superfamily: D-mannonate and D-gluconate dehydratases in the D-mannonate dehydratase subgroup.</title>
        <authorList>
            <person name="Wichelecki D.J."/>
            <person name="Balthazor B.M."/>
            <person name="Chau A.C."/>
            <person name="Vetting M.W."/>
            <person name="Fedorov A.A."/>
            <person name="Fedorov E.V."/>
            <person name="Lukk T."/>
            <person name="Patskovsky Y.V."/>
            <person name="Stead M.B."/>
            <person name="Hillerich B.S."/>
            <person name="Seidel R.D."/>
            <person name="Almo S.C."/>
            <person name="Gerlt J.A."/>
        </authorList>
    </citation>
    <scope>X-RAY CRYSTALLOGRAPHY (1.80 ANGSTROMS) IN COMPLEX WITH MAGNESIUM</scope>
    <scope>SUBUNIT</scope>
    <scope>LACK OF D-MANNONATE DEHYDRATASE ACTIVITY</scope>
    <source>
        <strain>638</strain>
    </source>
</reference>
<comment type="function">
    <text>Has no detectable activity with D-mannonate and with a panel of 70 other acid sugars (in vitro), in spite of the conservation of the residues that are expected to be important for catalytic activity and cofactor binding. May have evolved a divergent function.</text>
</comment>
<comment type="subunit">
    <text evidence="4">Homotetramer.</text>
</comment>
<comment type="similarity">
    <text evidence="3">Belongs to the mandelate racemase/muconate lactonizing enzyme family. GalD subfamily.</text>
</comment>
<name>IMAND_ENT38</name>
<accession>A4W7D6</accession>
<sequence length="399" mass="44684">MTPVIIKNIECFITRPDRHNLVTVRVTTEQGITGHGCATFQQRPLAVKTLVDEYLQPLMIGRDANNIEDLWQMMNVNAYWRNGPLMNNAISGVDMALWDIKGQLAGMPLYQLFGGKSRDAIPAYSHASGETLEALFASVDALIAQGYRHIRCQLGFYGGTPSALHAPDNPTPGAWFDQQEYMSNTVEMFHALREKYGWKLHILHDVHERLFPQQAVQLAKQLEPFQPYFIEDILPPQQSAWLEQVRQQSCVPLALGELFNNPAEWHDLIVNRRIDFIRCHVSQIGGITPALKLAHLCQAFGVRLAWHGPGDMTPIGVAVNTHLNIHLHNAAIQEFIPRSATTNDVFPGAPEVKEGFVYPPVQPGIGVGFNEALALAHPVLYRPHEWTQSRLPDGTIHTP</sequence>
<dbReference type="EMBL" id="CP000653">
    <property type="protein sequence ID" value="ABP59616.1"/>
    <property type="molecule type" value="Genomic_DNA"/>
</dbReference>
<dbReference type="RefSeq" id="WP_012016337.1">
    <property type="nucleotide sequence ID" value="NC_009436.1"/>
</dbReference>
<dbReference type="PDB" id="3TJI">
    <property type="method" value="X-ray"/>
    <property type="resolution" value="1.80 A"/>
    <property type="chains" value="A/B/C/D=1-399"/>
</dbReference>
<dbReference type="PDBsum" id="3TJI"/>
<dbReference type="SMR" id="A4W7D6"/>
<dbReference type="STRING" id="399742.Ent638_0932"/>
<dbReference type="KEGG" id="ent:Ent638_0932"/>
<dbReference type="eggNOG" id="COG4948">
    <property type="taxonomic scope" value="Bacteria"/>
</dbReference>
<dbReference type="HOGENOM" id="CLU_030273_6_1_6"/>
<dbReference type="OrthoDB" id="103536at2"/>
<dbReference type="EvolutionaryTrace" id="A4W7D6"/>
<dbReference type="Proteomes" id="UP000000230">
    <property type="component" value="Chromosome"/>
</dbReference>
<dbReference type="GO" id="GO:0000287">
    <property type="term" value="F:magnesium ion binding"/>
    <property type="evidence" value="ECO:0000314"/>
    <property type="project" value="UniProtKB"/>
</dbReference>
<dbReference type="GO" id="GO:0009063">
    <property type="term" value="P:amino acid catabolic process"/>
    <property type="evidence" value="ECO:0007669"/>
    <property type="project" value="InterPro"/>
</dbReference>
<dbReference type="FunFam" id="3.20.20.120:FF:000011">
    <property type="entry name" value="D-galactonate dehydratase family member VSWAT3_13707"/>
    <property type="match status" value="1"/>
</dbReference>
<dbReference type="Gene3D" id="3.20.20.120">
    <property type="entry name" value="Enolase-like C-terminal domain"/>
    <property type="match status" value="1"/>
</dbReference>
<dbReference type="Gene3D" id="3.30.390.10">
    <property type="entry name" value="Enolase-like, N-terminal domain"/>
    <property type="match status" value="1"/>
</dbReference>
<dbReference type="InterPro" id="IPR034589">
    <property type="entry name" value="D-mannonate_dehydratase-like"/>
</dbReference>
<dbReference type="InterPro" id="IPR034593">
    <property type="entry name" value="DgoD-like"/>
</dbReference>
<dbReference type="InterPro" id="IPR036849">
    <property type="entry name" value="Enolase-like_C_sf"/>
</dbReference>
<dbReference type="InterPro" id="IPR029017">
    <property type="entry name" value="Enolase-like_N"/>
</dbReference>
<dbReference type="InterPro" id="IPR029065">
    <property type="entry name" value="Enolase_C-like"/>
</dbReference>
<dbReference type="InterPro" id="IPR018110">
    <property type="entry name" value="Mandel_Rmase/mucon_lact_enz_CS"/>
</dbReference>
<dbReference type="InterPro" id="IPR013342">
    <property type="entry name" value="Mandelate_racemase_C"/>
</dbReference>
<dbReference type="InterPro" id="IPR013341">
    <property type="entry name" value="Mandelate_racemase_N_dom"/>
</dbReference>
<dbReference type="PANTHER" id="PTHR48080">
    <property type="entry name" value="D-GALACTONATE DEHYDRATASE-RELATED"/>
    <property type="match status" value="1"/>
</dbReference>
<dbReference type="PANTHER" id="PTHR48080:SF6">
    <property type="entry name" value="STARVATION-SENSING PROTEIN RSPA"/>
    <property type="match status" value="1"/>
</dbReference>
<dbReference type="Pfam" id="PF13378">
    <property type="entry name" value="MR_MLE_C"/>
    <property type="match status" value="1"/>
</dbReference>
<dbReference type="Pfam" id="PF02746">
    <property type="entry name" value="MR_MLE_N"/>
    <property type="match status" value="1"/>
</dbReference>
<dbReference type="SFLD" id="SFLDS00001">
    <property type="entry name" value="Enolase"/>
    <property type="match status" value="1"/>
</dbReference>
<dbReference type="SFLD" id="SFLDG00033">
    <property type="entry name" value="mannonate_dehydratase"/>
    <property type="match status" value="1"/>
</dbReference>
<dbReference type="SMART" id="SM00922">
    <property type="entry name" value="MR_MLE"/>
    <property type="match status" value="1"/>
</dbReference>
<dbReference type="SUPFAM" id="SSF51604">
    <property type="entry name" value="Enolase C-terminal domain-like"/>
    <property type="match status" value="1"/>
</dbReference>
<dbReference type="SUPFAM" id="SSF54826">
    <property type="entry name" value="Enolase N-terminal domain-like"/>
    <property type="match status" value="1"/>
</dbReference>
<dbReference type="PROSITE" id="PS00908">
    <property type="entry name" value="MR_MLE_1"/>
    <property type="match status" value="1"/>
</dbReference>
<organism>
    <name type="scientific">Enterobacter sp. (strain 638)</name>
    <dbReference type="NCBI Taxonomy" id="399742"/>
    <lineage>
        <taxon>Bacteria</taxon>
        <taxon>Pseudomonadati</taxon>
        <taxon>Pseudomonadota</taxon>
        <taxon>Gammaproteobacteria</taxon>
        <taxon>Enterobacterales</taxon>
        <taxon>Enterobacteriaceae</taxon>
        <taxon>Enterobacter</taxon>
    </lineage>
</organism>